<evidence type="ECO:0000255" key="1">
    <source>
        <dbReference type="HAMAP-Rule" id="MF_01656"/>
    </source>
</evidence>
<proteinExistence type="inferred from homology"/>
<organism>
    <name type="scientific">Rhodococcus erythropolis (strain PR4 / NBRC 100887)</name>
    <dbReference type="NCBI Taxonomy" id="234621"/>
    <lineage>
        <taxon>Bacteria</taxon>
        <taxon>Bacillati</taxon>
        <taxon>Actinomycetota</taxon>
        <taxon>Actinomycetes</taxon>
        <taxon>Mycobacteriales</taxon>
        <taxon>Nocardiaceae</taxon>
        <taxon>Rhodococcus</taxon>
        <taxon>Rhodococcus erythropolis group</taxon>
    </lineage>
</organism>
<keyword id="KW-0058">Aromatic hydrocarbons catabolism</keyword>
<keyword id="KW-0456">Lyase</keyword>
<keyword id="KW-0464">Manganese</keyword>
<keyword id="KW-0479">Metal-binding</keyword>
<feature type="chain" id="PRO_0000387893" description="4-hydroxy-2-oxovalerate aldolase 1">
    <location>
        <begin position="1"/>
        <end position="347"/>
    </location>
</feature>
<feature type="domain" description="Pyruvate carboxyltransferase" evidence="1">
    <location>
        <begin position="13"/>
        <end position="265"/>
    </location>
</feature>
<feature type="active site" description="Proton acceptor" evidence="1">
    <location>
        <position position="25"/>
    </location>
</feature>
<feature type="binding site" evidence="1">
    <location>
        <begin position="21"/>
        <end position="22"/>
    </location>
    <ligand>
        <name>substrate</name>
    </ligand>
</feature>
<feature type="binding site" evidence="1">
    <location>
        <position position="22"/>
    </location>
    <ligand>
        <name>Mn(2+)</name>
        <dbReference type="ChEBI" id="CHEBI:29035"/>
    </ligand>
</feature>
<feature type="binding site" evidence="1">
    <location>
        <position position="175"/>
    </location>
    <ligand>
        <name>substrate</name>
    </ligand>
</feature>
<feature type="binding site" evidence="1">
    <location>
        <position position="204"/>
    </location>
    <ligand>
        <name>Mn(2+)</name>
        <dbReference type="ChEBI" id="CHEBI:29035"/>
    </ligand>
</feature>
<feature type="binding site" evidence="1">
    <location>
        <position position="204"/>
    </location>
    <ligand>
        <name>substrate</name>
    </ligand>
</feature>
<feature type="binding site" evidence="1">
    <location>
        <position position="206"/>
    </location>
    <ligand>
        <name>Mn(2+)</name>
        <dbReference type="ChEBI" id="CHEBI:29035"/>
    </ligand>
</feature>
<feature type="binding site" evidence="1">
    <location>
        <position position="295"/>
    </location>
    <ligand>
        <name>substrate</name>
    </ligand>
</feature>
<feature type="site" description="Transition state stabilizer" evidence="1">
    <location>
        <position position="21"/>
    </location>
</feature>
<reference key="1">
    <citation type="submission" date="2005-03" db="EMBL/GenBank/DDBJ databases">
        <title>Comparison of the complete genome sequences of Rhodococcus erythropolis PR4 and Rhodococcus opacus B4.</title>
        <authorList>
            <person name="Takarada H."/>
            <person name="Sekine M."/>
            <person name="Hosoyama A."/>
            <person name="Yamada R."/>
            <person name="Fujisawa T."/>
            <person name="Omata S."/>
            <person name="Shimizu A."/>
            <person name="Tsukatani N."/>
            <person name="Tanikawa S."/>
            <person name="Fujita N."/>
            <person name="Harayama S."/>
        </authorList>
    </citation>
    <scope>NUCLEOTIDE SEQUENCE [LARGE SCALE GENOMIC DNA]</scope>
    <source>
        <strain>PR4 / NBRC 100887</strain>
    </source>
</reference>
<gene>
    <name type="ordered locus">RER_07410</name>
</gene>
<comment type="catalytic activity">
    <reaction evidence="1">
        <text>(S)-4-hydroxy-2-oxopentanoate = acetaldehyde + pyruvate</text>
        <dbReference type="Rhea" id="RHEA:22624"/>
        <dbReference type="ChEBI" id="CHEBI:15343"/>
        <dbReference type="ChEBI" id="CHEBI:15361"/>
        <dbReference type="ChEBI" id="CHEBI:73143"/>
        <dbReference type="EC" id="4.1.3.39"/>
    </reaction>
</comment>
<comment type="similarity">
    <text evidence="1">Belongs to the 4-hydroxy-2-oxovalerate aldolase family.</text>
</comment>
<protein>
    <recommendedName>
        <fullName evidence="1">4-hydroxy-2-oxovalerate aldolase 1</fullName>
        <shortName evidence="1">HOA 1</shortName>
        <ecNumber evidence="1">4.1.3.39</ecNumber>
    </recommendedName>
    <alternativeName>
        <fullName evidence="1">4-hydroxy-2-keto-pentanoic acid aldolase 1</fullName>
    </alternativeName>
    <alternativeName>
        <fullName evidence="1">4-hydroxy-2-oxopentanoate aldolase 1</fullName>
    </alternativeName>
</protein>
<sequence>MSDMIHFDSSWDIRVTDTSLRDGSHHKRHQFTVEEVRAIVGALDGAGVPVIEVTHGDGLGGSSFNYGFSKTPEQELIKAAVETATNAKIAFLMLPGLGIKDDIVIAQDNGASICRIATHCTEADVSIQHFGLARERGLETVGFLMMAHSIPPEKLAKQARIMADAGCQCVYVVDSAGALVLEQVSDRVEALVQELGNDAQVGFHGHENLGLGVANSIAAVRAGAKQIDGSTRRFGAGAGNAPVEAFVGVCDKIGVKTGIDFFAIADAAEDVVRPAMPQECLLDRQALMMGYAGVYSSFLKHAERQAERYGVSSAELLVRAGKRKLVGGQEDQLIDIALELQREAAAS</sequence>
<name>HOA1_RHOE4</name>
<dbReference type="EC" id="4.1.3.39" evidence="1"/>
<dbReference type="EMBL" id="AP008957">
    <property type="protein sequence ID" value="BAH31449.1"/>
    <property type="molecule type" value="Genomic_DNA"/>
</dbReference>
<dbReference type="SMR" id="C0ZPX1"/>
<dbReference type="KEGG" id="rer:RER_07410"/>
<dbReference type="eggNOG" id="COG0119">
    <property type="taxonomic scope" value="Bacteria"/>
</dbReference>
<dbReference type="HOGENOM" id="CLU_049173_0_0_11"/>
<dbReference type="Proteomes" id="UP000002204">
    <property type="component" value="Chromosome"/>
</dbReference>
<dbReference type="GO" id="GO:0003852">
    <property type="term" value="F:2-isopropylmalate synthase activity"/>
    <property type="evidence" value="ECO:0007669"/>
    <property type="project" value="TreeGrafter"/>
</dbReference>
<dbReference type="GO" id="GO:0008701">
    <property type="term" value="F:4-hydroxy-2-oxovalerate aldolase activity"/>
    <property type="evidence" value="ECO:0007669"/>
    <property type="project" value="UniProtKB-UniRule"/>
</dbReference>
<dbReference type="GO" id="GO:0030145">
    <property type="term" value="F:manganese ion binding"/>
    <property type="evidence" value="ECO:0007669"/>
    <property type="project" value="UniProtKB-UniRule"/>
</dbReference>
<dbReference type="GO" id="GO:0009056">
    <property type="term" value="P:catabolic process"/>
    <property type="evidence" value="ECO:0007669"/>
    <property type="project" value="UniProtKB-KW"/>
</dbReference>
<dbReference type="GO" id="GO:0009098">
    <property type="term" value="P:L-leucine biosynthetic process"/>
    <property type="evidence" value="ECO:0007669"/>
    <property type="project" value="TreeGrafter"/>
</dbReference>
<dbReference type="CDD" id="cd07943">
    <property type="entry name" value="DRE_TIM_HOA"/>
    <property type="match status" value="1"/>
</dbReference>
<dbReference type="Gene3D" id="1.10.8.60">
    <property type="match status" value="1"/>
</dbReference>
<dbReference type="Gene3D" id="3.20.20.70">
    <property type="entry name" value="Aldolase class I"/>
    <property type="match status" value="1"/>
</dbReference>
<dbReference type="HAMAP" id="MF_01656">
    <property type="entry name" value="HOA"/>
    <property type="match status" value="1"/>
</dbReference>
<dbReference type="InterPro" id="IPR050073">
    <property type="entry name" value="2-IPM_HCS-like"/>
</dbReference>
<dbReference type="InterPro" id="IPR017629">
    <property type="entry name" value="4OH_2_O-val_aldolase"/>
</dbReference>
<dbReference type="InterPro" id="IPR013785">
    <property type="entry name" value="Aldolase_TIM"/>
</dbReference>
<dbReference type="InterPro" id="IPR012425">
    <property type="entry name" value="DmpG_comm"/>
</dbReference>
<dbReference type="InterPro" id="IPR035685">
    <property type="entry name" value="DRE_TIM_HOA"/>
</dbReference>
<dbReference type="InterPro" id="IPR000891">
    <property type="entry name" value="PYR_CT"/>
</dbReference>
<dbReference type="NCBIfam" id="TIGR03217">
    <property type="entry name" value="4OH_2_O_val_ald"/>
    <property type="match status" value="1"/>
</dbReference>
<dbReference type="NCBIfam" id="NF006049">
    <property type="entry name" value="PRK08195.1"/>
    <property type="match status" value="1"/>
</dbReference>
<dbReference type="PANTHER" id="PTHR10277:SF9">
    <property type="entry name" value="2-ISOPROPYLMALATE SYNTHASE 1, CHLOROPLASTIC-RELATED"/>
    <property type="match status" value="1"/>
</dbReference>
<dbReference type="PANTHER" id="PTHR10277">
    <property type="entry name" value="HOMOCITRATE SYNTHASE-RELATED"/>
    <property type="match status" value="1"/>
</dbReference>
<dbReference type="Pfam" id="PF07836">
    <property type="entry name" value="DmpG_comm"/>
    <property type="match status" value="1"/>
</dbReference>
<dbReference type="Pfam" id="PF00682">
    <property type="entry name" value="HMGL-like"/>
    <property type="match status" value="1"/>
</dbReference>
<dbReference type="SUPFAM" id="SSF51569">
    <property type="entry name" value="Aldolase"/>
    <property type="match status" value="1"/>
</dbReference>
<dbReference type="SUPFAM" id="SSF89000">
    <property type="entry name" value="post-HMGL domain-like"/>
    <property type="match status" value="1"/>
</dbReference>
<dbReference type="PROSITE" id="PS50991">
    <property type="entry name" value="PYR_CT"/>
    <property type="match status" value="1"/>
</dbReference>
<accession>C0ZPX1</accession>